<proteinExistence type="inferred from homology"/>
<dbReference type="EC" id="3.1.1.81"/>
<dbReference type="EMBL" id="AP009384">
    <property type="protein sequence ID" value="BAF86765.1"/>
    <property type="molecule type" value="Genomic_DNA"/>
</dbReference>
<dbReference type="RefSeq" id="WP_012169298.1">
    <property type="nucleotide sequence ID" value="NC_009937.1"/>
</dbReference>
<dbReference type="SMR" id="A8IQD2"/>
<dbReference type="STRING" id="438753.AZC_0767"/>
<dbReference type="KEGG" id="azc:AZC_0767"/>
<dbReference type="eggNOG" id="COG0491">
    <property type="taxonomic scope" value="Bacteria"/>
</dbReference>
<dbReference type="HOGENOM" id="CLU_030571_3_2_5"/>
<dbReference type="Proteomes" id="UP000000270">
    <property type="component" value="Chromosome"/>
</dbReference>
<dbReference type="GO" id="GO:0102007">
    <property type="term" value="F:acyl-L-homoserine-lactone lactonohydrolase activity"/>
    <property type="evidence" value="ECO:0007669"/>
    <property type="project" value="UniProtKB-EC"/>
</dbReference>
<dbReference type="GO" id="GO:0046872">
    <property type="term" value="F:metal ion binding"/>
    <property type="evidence" value="ECO:0007669"/>
    <property type="project" value="UniProtKB-KW"/>
</dbReference>
<dbReference type="CDD" id="cd07729">
    <property type="entry name" value="AHL_lactonase_MBL-fold"/>
    <property type="match status" value="1"/>
</dbReference>
<dbReference type="Gene3D" id="3.60.15.10">
    <property type="entry name" value="Ribonuclease Z/Hydroxyacylglutathione hydrolase-like"/>
    <property type="match status" value="1"/>
</dbReference>
<dbReference type="InterPro" id="IPR054889">
    <property type="entry name" value="AHLLactAttM"/>
</dbReference>
<dbReference type="InterPro" id="IPR051013">
    <property type="entry name" value="MBL_superfamily_lactonases"/>
</dbReference>
<dbReference type="InterPro" id="IPR001279">
    <property type="entry name" value="Metallo-B-lactamas"/>
</dbReference>
<dbReference type="InterPro" id="IPR036866">
    <property type="entry name" value="RibonucZ/Hydroxyglut_hydro"/>
</dbReference>
<dbReference type="NCBIfam" id="NF045700">
    <property type="entry name" value="AHLLactAttM"/>
    <property type="match status" value="1"/>
</dbReference>
<dbReference type="PANTHER" id="PTHR42978:SF2">
    <property type="entry name" value="102 KBASES UNSTABLE REGION: FROM 1 TO 119443"/>
    <property type="match status" value="1"/>
</dbReference>
<dbReference type="PANTHER" id="PTHR42978">
    <property type="entry name" value="QUORUM-QUENCHING LACTONASE YTNP-RELATED-RELATED"/>
    <property type="match status" value="1"/>
</dbReference>
<dbReference type="Pfam" id="PF00753">
    <property type="entry name" value="Lactamase_B"/>
    <property type="match status" value="1"/>
</dbReference>
<dbReference type="SMART" id="SM00849">
    <property type="entry name" value="Lactamase_B"/>
    <property type="match status" value="1"/>
</dbReference>
<dbReference type="SUPFAM" id="SSF56281">
    <property type="entry name" value="Metallo-hydrolase/oxidoreductase"/>
    <property type="match status" value="1"/>
</dbReference>
<protein>
    <recommendedName>
        <fullName evidence="2">N-acyl homoserine lactonase AttM</fullName>
        <shortName evidence="2">AHL-lactonase AttM</shortName>
        <ecNumber>3.1.1.81</ecNumber>
    </recommendedName>
</protein>
<accession>A8IQD2</accession>
<gene>
    <name evidence="2" type="primary">attM</name>
    <name type="ordered locus">AZC_0767</name>
</gene>
<organism>
    <name type="scientific">Azorhizobium caulinodans (strain ATCC 43989 / DSM 5975 / JCM 20966 / LMG 6465 / NBRC 14845 / NCIMB 13405 / ORS 571)</name>
    <dbReference type="NCBI Taxonomy" id="438753"/>
    <lineage>
        <taxon>Bacteria</taxon>
        <taxon>Pseudomonadati</taxon>
        <taxon>Pseudomonadota</taxon>
        <taxon>Alphaproteobacteria</taxon>
        <taxon>Hyphomicrobiales</taxon>
        <taxon>Xanthobacteraceae</taxon>
        <taxon>Azorhizobium</taxon>
    </lineage>
</organism>
<feature type="chain" id="PRO_0000403297" description="N-acyl homoserine lactonase AttM">
    <location>
        <begin position="1"/>
        <end position="263"/>
    </location>
</feature>
<feature type="binding site" evidence="1">
    <location>
        <position position="103"/>
    </location>
    <ligand>
        <name>Zn(2+)</name>
        <dbReference type="ChEBI" id="CHEBI:29105"/>
        <label>1</label>
    </ligand>
</feature>
<feature type="binding site" evidence="1">
    <location>
        <position position="105"/>
    </location>
    <ligand>
        <name>Zn(2+)</name>
        <dbReference type="ChEBI" id="CHEBI:29105"/>
        <label>1</label>
    </ligand>
</feature>
<feature type="binding site" evidence="1">
    <location>
        <position position="107"/>
    </location>
    <ligand>
        <name>Zn(2+)</name>
        <dbReference type="ChEBI" id="CHEBI:29105"/>
        <label>2</label>
    </ligand>
</feature>
<feature type="binding site" evidence="1">
    <location>
        <position position="108"/>
    </location>
    <ligand>
        <name>Zn(2+)</name>
        <dbReference type="ChEBI" id="CHEBI:29105"/>
        <label>2</label>
    </ligand>
</feature>
<feature type="binding site" evidence="1">
    <location>
        <position position="180"/>
    </location>
    <ligand>
        <name>Zn(2+)</name>
        <dbReference type="ChEBI" id="CHEBI:29105"/>
        <label>1</label>
    </ligand>
</feature>
<feature type="binding site" evidence="1">
    <location>
        <position position="202"/>
    </location>
    <ligand>
        <name>Zn(2+)</name>
        <dbReference type="ChEBI" id="CHEBI:29105"/>
        <label>1</label>
    </ligand>
</feature>
<feature type="binding site" evidence="1">
    <location>
        <position position="202"/>
    </location>
    <ligand>
        <name>Zn(2+)</name>
        <dbReference type="ChEBI" id="CHEBI:29105"/>
        <label>2</label>
    </ligand>
</feature>
<feature type="binding site" evidence="1">
    <location>
        <position position="247"/>
    </location>
    <ligand>
        <name>Zn(2+)</name>
        <dbReference type="ChEBI" id="CHEBI:29105"/>
        <label>2</label>
    </ligand>
</feature>
<keyword id="KW-0378">Hydrolase</keyword>
<keyword id="KW-0479">Metal-binding</keyword>
<keyword id="KW-0614">Plasmid</keyword>
<keyword id="KW-1185">Reference proteome</keyword>
<keyword id="KW-0862">Zinc</keyword>
<evidence type="ECO:0000250" key="1">
    <source>
        <dbReference type="UniProtKB" id="Q7B8B9"/>
    </source>
</evidence>
<evidence type="ECO:0000250" key="2">
    <source>
        <dbReference type="UniProtKB" id="Q8VPD5"/>
    </source>
</evidence>
<evidence type="ECO:0000305" key="3"/>
<comment type="catalytic activity">
    <reaction evidence="2">
        <text>an N-acyl-L-homoserine lactone + H2O = an N-acyl-L-homoserine + H(+)</text>
        <dbReference type="Rhea" id="RHEA:22576"/>
        <dbReference type="ChEBI" id="CHEBI:15377"/>
        <dbReference type="ChEBI" id="CHEBI:15378"/>
        <dbReference type="ChEBI" id="CHEBI:55474"/>
        <dbReference type="ChEBI" id="CHEBI:58921"/>
        <dbReference type="EC" id="3.1.1.81"/>
    </reaction>
</comment>
<comment type="cofactor">
    <cofactor evidence="1">
        <name>Zn(2+)</name>
        <dbReference type="ChEBI" id="CHEBI:29105"/>
    </cofactor>
    <text evidence="1">Binds 2 Zn(2+) ions per subunit.</text>
</comment>
<comment type="similarity">
    <text evidence="3">Belongs to the metallo-beta-lactamase superfamily.</text>
</comment>
<name>AHLLM_AZOC5</name>
<reference key="1">
    <citation type="submission" date="2007-04" db="EMBL/GenBank/DDBJ databases">
        <title>Complete genome sequence of the nitrogen-fixing bacterium Azorhizobium caulinodans ORS571.</title>
        <authorList>
            <person name="Lee K.B."/>
            <person name="Backer P.D."/>
            <person name="Aono T."/>
            <person name="Liu C.T."/>
            <person name="Suzuki S."/>
            <person name="Suzuki T."/>
            <person name="Kaneko T."/>
            <person name="Yamada M."/>
            <person name="Tabata S."/>
            <person name="Kupfer D.M."/>
            <person name="Najar F.Z."/>
            <person name="Wiley G.B."/>
            <person name="Roe B."/>
            <person name="Binnewies T."/>
            <person name="Ussery D."/>
            <person name="Vereecke D."/>
            <person name="Gevers D."/>
            <person name="Holsters M."/>
            <person name="Oyaizu H."/>
        </authorList>
    </citation>
    <scope>NUCLEOTIDE SEQUENCE [LARGE SCALE GENOMIC DNA]</scope>
    <source>
        <strain>ATCC 43989 / DSM 5975 / JCM 20966 / LMG 6465 / NBRC 14845 / NCIMB 13405 / ORS 571</strain>
    </source>
</reference>
<sequence>MTDIRLYMLQSGSLKCKVHNIKMNQGNGADYEIPVPFFLITHPKGHTIIDGGNAVEVATDPRGHWGGVCDVYWPVMREDEGCVAQVKALGIDPADVKYVVQSHLHLDHTGAIGRFPNATHIVQRREYEYAFTPDWFAGGGYIRKDFDRPGLRWQFLNADVDDYYDIYGDGTLTTVFSPGHAPGHQSFLVRLPKSGPLLLTIDAAYTLDHWNEQALPGFLASTVDTVRSVQKLRTLAERTGAQVVTGHDPDAWPSFKKAPGYYD</sequence>